<dbReference type="EC" id="2.1.1.68"/>
<dbReference type="EMBL" id="D49710">
    <property type="protein sequence ID" value="BAA08558.1"/>
    <property type="molecule type" value="Genomic_DNA"/>
</dbReference>
<dbReference type="SMR" id="Q43046"/>
<dbReference type="UniPathway" id="UPA00711"/>
<dbReference type="GO" id="GO:0047763">
    <property type="term" value="F:caffeate O-methyltransferase activity"/>
    <property type="evidence" value="ECO:0007669"/>
    <property type="project" value="UniProtKB-EC"/>
</dbReference>
<dbReference type="GO" id="GO:0046983">
    <property type="term" value="F:protein dimerization activity"/>
    <property type="evidence" value="ECO:0007669"/>
    <property type="project" value="InterPro"/>
</dbReference>
<dbReference type="GO" id="GO:0009809">
    <property type="term" value="P:lignin biosynthetic process"/>
    <property type="evidence" value="ECO:0007669"/>
    <property type="project" value="UniProtKB-KW"/>
</dbReference>
<dbReference type="GO" id="GO:0032259">
    <property type="term" value="P:methylation"/>
    <property type="evidence" value="ECO:0007669"/>
    <property type="project" value="UniProtKB-KW"/>
</dbReference>
<dbReference type="CDD" id="cd02440">
    <property type="entry name" value="AdoMet_MTases"/>
    <property type="match status" value="1"/>
</dbReference>
<dbReference type="FunFam" id="1.10.10.10:FF:000357">
    <property type="entry name" value="Caffeic acid 3-O-methyltransferase"/>
    <property type="match status" value="1"/>
</dbReference>
<dbReference type="FunFam" id="3.40.50.150:FF:000061">
    <property type="entry name" value="Caffeic acid O-methyltransferase"/>
    <property type="match status" value="1"/>
</dbReference>
<dbReference type="Gene3D" id="3.40.50.150">
    <property type="entry name" value="Vaccinia Virus protein VP39"/>
    <property type="match status" value="1"/>
</dbReference>
<dbReference type="Gene3D" id="1.10.10.10">
    <property type="entry name" value="Winged helix-like DNA-binding domain superfamily/Winged helix DNA-binding domain"/>
    <property type="match status" value="1"/>
</dbReference>
<dbReference type="InterPro" id="IPR016461">
    <property type="entry name" value="COMT-like"/>
</dbReference>
<dbReference type="InterPro" id="IPR001077">
    <property type="entry name" value="O_MeTrfase_dom"/>
</dbReference>
<dbReference type="InterPro" id="IPR012967">
    <property type="entry name" value="Plant_O-MeTrfase_dimerisation"/>
</dbReference>
<dbReference type="InterPro" id="IPR029063">
    <property type="entry name" value="SAM-dependent_MTases_sf"/>
</dbReference>
<dbReference type="InterPro" id="IPR036388">
    <property type="entry name" value="WH-like_DNA-bd_sf"/>
</dbReference>
<dbReference type="InterPro" id="IPR036390">
    <property type="entry name" value="WH_DNA-bd_sf"/>
</dbReference>
<dbReference type="PANTHER" id="PTHR11746">
    <property type="entry name" value="O-METHYLTRANSFERASE"/>
    <property type="match status" value="1"/>
</dbReference>
<dbReference type="Pfam" id="PF08100">
    <property type="entry name" value="Dimerisation"/>
    <property type="match status" value="1"/>
</dbReference>
<dbReference type="Pfam" id="PF00891">
    <property type="entry name" value="Methyltransf_2"/>
    <property type="match status" value="1"/>
</dbReference>
<dbReference type="PIRSF" id="PIRSF005739">
    <property type="entry name" value="O-mtase"/>
    <property type="match status" value="1"/>
</dbReference>
<dbReference type="SUPFAM" id="SSF53335">
    <property type="entry name" value="S-adenosyl-L-methionine-dependent methyltransferases"/>
    <property type="match status" value="1"/>
</dbReference>
<dbReference type="SUPFAM" id="SSF46785">
    <property type="entry name" value="Winged helix' DNA-binding domain"/>
    <property type="match status" value="1"/>
</dbReference>
<dbReference type="PROSITE" id="PS51683">
    <property type="entry name" value="SAM_OMT_II"/>
    <property type="match status" value="1"/>
</dbReference>
<feature type="chain" id="PRO_0000063207" description="Caffeic acid 3-O-methyltransferase 1">
    <location>
        <begin position="1"/>
        <end position="365"/>
    </location>
</feature>
<feature type="region of interest" description="Substrate binding" evidence="1">
    <location>
        <begin position="162"/>
        <end position="180"/>
    </location>
</feature>
<feature type="active site" description="Proton acceptor" evidence="2">
    <location>
        <position position="269"/>
    </location>
</feature>
<feature type="binding site" evidence="1">
    <location>
        <begin position="130"/>
        <end position="136"/>
    </location>
    <ligand>
        <name>substrate</name>
    </ligand>
</feature>
<feature type="binding site" evidence="2">
    <location>
        <position position="208"/>
    </location>
    <ligand>
        <name>S-adenosyl-L-methionine</name>
        <dbReference type="ChEBI" id="CHEBI:59789"/>
    </ligand>
</feature>
<feature type="binding site" evidence="2">
    <location>
        <position position="231"/>
    </location>
    <ligand>
        <name>S-adenosyl-L-methionine</name>
        <dbReference type="ChEBI" id="CHEBI:59789"/>
    </ligand>
</feature>
<feature type="binding site" evidence="2">
    <location>
        <position position="251"/>
    </location>
    <ligand>
        <name>S-adenosyl-L-methionine</name>
        <dbReference type="ChEBI" id="CHEBI:59789"/>
    </ligand>
</feature>
<feature type="binding site" evidence="2">
    <location>
        <position position="252"/>
    </location>
    <ligand>
        <name>S-adenosyl-L-methionine</name>
        <dbReference type="ChEBI" id="CHEBI:59789"/>
    </ligand>
</feature>
<feature type="binding site" evidence="2">
    <location>
        <position position="265"/>
    </location>
    <ligand>
        <name>S-adenosyl-L-methionine</name>
        <dbReference type="ChEBI" id="CHEBI:59789"/>
    </ligand>
</feature>
<accession>Q43046</accession>
<comment type="function">
    <text>Catalyzes the conversion of caffeic acid to ferulic acid and of 5-hydroxyferulic acid to sinapic acid. The resulting products may subsequently be converted to the corresponding alcohols that are incorporated into lignins.</text>
</comment>
<comment type="catalytic activity">
    <reaction>
        <text>(E)-caffeate + S-adenosyl-L-methionine = (E)-ferulate + S-adenosyl-L-homocysteine + H(+)</text>
        <dbReference type="Rhea" id="RHEA:20225"/>
        <dbReference type="ChEBI" id="CHEBI:15378"/>
        <dbReference type="ChEBI" id="CHEBI:29749"/>
        <dbReference type="ChEBI" id="CHEBI:57770"/>
        <dbReference type="ChEBI" id="CHEBI:57856"/>
        <dbReference type="ChEBI" id="CHEBI:59789"/>
        <dbReference type="EC" id="2.1.1.68"/>
    </reaction>
</comment>
<comment type="pathway">
    <text>Aromatic compound metabolism; phenylpropanoid biosynthesis.</text>
</comment>
<comment type="subunit">
    <text evidence="1">Homodimer.</text>
</comment>
<comment type="similarity">
    <text evidence="2">Belongs to the class I-like SAM-binding methyltransferase superfamily. Cation-independent O-methyltransferase family. COMT subfamily.</text>
</comment>
<sequence>MGSTGETQMTPTQVSDEEAHLFAMQLASASVLPMILKTAIELDLLEIMAKAGPGAFLSTSEIASHLPTKNPDAPVMLDRILRLLASYSILTCSLKDLPDGKVERLYGLAPVCKFLTKNEDGVSVSPLCLMNQDKVLMESWYYLKDAILEGGIPFNKAYGMTAFEYHGTDPRFNKVFNKGMSDHSTITMKKILETYKGFEGLTSLVDVGGGTGAVVNTIVSKYPSIKGINFDLPHVIEDAPSYPGVEHVGGDMFVSVPNADAVFMKWICHDWSDAHCLKFLKNCYDALPENGKVILVECILPVAPDTSLATKGVVHVDVIMLAHNPGGKERTEKEFEGLANGAGFQGFEVMCCAFNTHVIEFRKKA</sequence>
<name>COMT1_POPKI</name>
<reference key="1">
    <citation type="journal article" date="1996" name="Plant Sci.">
        <title>Molecular cloning and tissue-specific expression of two genes that encode caffeic acid O-methyltransferases from Populus kitakamiensis.</title>
        <authorList>
            <person name="Hayakawa T."/>
            <person name="Nanto K."/>
            <person name="Kawai S."/>
            <person name="Katayama Y."/>
            <person name="Morohoshi N."/>
        </authorList>
    </citation>
    <scope>NUCLEOTIDE SEQUENCE [GENOMIC DNA]</scope>
</reference>
<proteinExistence type="inferred from homology"/>
<organism>
    <name type="scientific">Populus kitakamiensis</name>
    <name type="common">Aspen</name>
    <name type="synonym">Populus sieboldii x Populus grandidentata</name>
    <dbReference type="NCBI Taxonomy" id="34292"/>
    <lineage>
        <taxon>Eukaryota</taxon>
        <taxon>Viridiplantae</taxon>
        <taxon>Streptophyta</taxon>
        <taxon>Embryophyta</taxon>
        <taxon>Tracheophyta</taxon>
        <taxon>Spermatophyta</taxon>
        <taxon>Magnoliopsida</taxon>
        <taxon>eudicotyledons</taxon>
        <taxon>Gunneridae</taxon>
        <taxon>Pentapetalae</taxon>
        <taxon>rosids</taxon>
        <taxon>fabids</taxon>
        <taxon>Malpighiales</taxon>
        <taxon>Salicaceae</taxon>
        <taxon>Saliceae</taxon>
        <taxon>Populus</taxon>
    </lineage>
</organism>
<protein>
    <recommendedName>
        <fullName>Caffeic acid 3-O-methyltransferase 1</fullName>
        <shortName>CAOMT-1</shortName>
        <shortName>COMT-1</shortName>
        <ecNumber>2.1.1.68</ecNumber>
    </recommendedName>
    <alternativeName>
        <fullName>S-adenosysl-L-methionine:caffeic acid 3-O-methyltransferase 1</fullName>
    </alternativeName>
</protein>
<evidence type="ECO:0000250" key="1"/>
<evidence type="ECO:0000255" key="2">
    <source>
        <dbReference type="PROSITE-ProRule" id="PRU01020"/>
    </source>
</evidence>
<keyword id="KW-0438">Lignin biosynthesis</keyword>
<keyword id="KW-0489">Methyltransferase</keyword>
<keyword id="KW-0949">S-adenosyl-L-methionine</keyword>
<keyword id="KW-0808">Transferase</keyword>
<gene>
    <name type="primary">HOMT1</name>
</gene>